<name>Y1857_NITEU</name>
<evidence type="ECO:0000250" key="1"/>
<evidence type="ECO:0000255" key="2">
    <source>
        <dbReference type="PROSITE-ProRule" id="PRU01024"/>
    </source>
</evidence>
<sequence length="393" mass="44854">MSFQGEITHLSQKGLGVVQHPENGLSYFVAGTWPGDRGEFEITDRALNNRKYGYARLIRLIQSSRHRKTPECRFLGFSGNDCSGCPWMIADYDSQLEQKKNRFLYAMHRVGFDLADLNIGAVQPSPDLFGYRNRFQVKTDGEKLGFVAEGSHHIVPIEDCLILNPACRQHLQTLRKHLPSREWSPAPGDDWNFIDLDDQSPAEPVLLNWKQPFRQGNDAQNQWMRSWLKYALEQHGHSHKIVELFCGSGNFTEVIAQTGCPEILAYEADPQAITVLRQKNLPGVDARTADLYHPFIWKILKKNVQDAGILVLDPPRSGLKTLRGFFDAFAALETICYISCDPVTFARDAWIFCKNGWKFTDIQLIDLFPHTPHIEITATFHKQWGNTKKGNKR</sequence>
<protein>
    <recommendedName>
        <fullName>Uncharacterized RNA methyltransferase NE1857</fullName>
        <ecNumber>2.1.1.-</ecNumber>
    </recommendedName>
</protein>
<organism>
    <name type="scientific">Nitrosomonas europaea (strain ATCC 19718 / CIP 103999 / KCTC 2705 / NBRC 14298)</name>
    <dbReference type="NCBI Taxonomy" id="228410"/>
    <lineage>
        <taxon>Bacteria</taxon>
        <taxon>Pseudomonadati</taxon>
        <taxon>Pseudomonadota</taxon>
        <taxon>Betaproteobacteria</taxon>
        <taxon>Nitrosomonadales</taxon>
        <taxon>Nitrosomonadaceae</taxon>
        <taxon>Nitrosomonas</taxon>
    </lineage>
</organism>
<feature type="chain" id="PRO_0000162004" description="Uncharacterized RNA methyltransferase NE1857">
    <location>
        <begin position="1"/>
        <end position="393"/>
    </location>
</feature>
<feature type="active site" description="Nucleophile" evidence="2">
    <location>
        <position position="340"/>
    </location>
</feature>
<feature type="binding site" evidence="1">
    <location>
        <position position="72"/>
    </location>
    <ligand>
        <name>[4Fe-4S] cluster</name>
        <dbReference type="ChEBI" id="CHEBI:49883"/>
    </ligand>
</feature>
<feature type="binding site" evidence="1">
    <location>
        <position position="82"/>
    </location>
    <ligand>
        <name>[4Fe-4S] cluster</name>
        <dbReference type="ChEBI" id="CHEBI:49883"/>
    </ligand>
</feature>
<feature type="binding site" evidence="1">
    <location>
        <position position="85"/>
    </location>
    <ligand>
        <name>[4Fe-4S] cluster</name>
        <dbReference type="ChEBI" id="CHEBI:49883"/>
    </ligand>
</feature>
<feature type="binding site" evidence="1">
    <location>
        <position position="160"/>
    </location>
    <ligand>
        <name>[4Fe-4S] cluster</name>
        <dbReference type="ChEBI" id="CHEBI:49883"/>
    </ligand>
</feature>
<feature type="binding site" evidence="2">
    <location>
        <position position="215"/>
    </location>
    <ligand>
        <name>S-adenosyl-L-methionine</name>
        <dbReference type="ChEBI" id="CHEBI:59789"/>
    </ligand>
</feature>
<feature type="binding site" evidence="2">
    <location>
        <position position="245"/>
    </location>
    <ligand>
        <name>S-adenosyl-L-methionine</name>
        <dbReference type="ChEBI" id="CHEBI:59789"/>
    </ligand>
</feature>
<feature type="binding site" evidence="2">
    <location>
        <position position="267"/>
    </location>
    <ligand>
        <name>S-adenosyl-L-methionine</name>
        <dbReference type="ChEBI" id="CHEBI:59789"/>
    </ligand>
</feature>
<feature type="binding site" evidence="2">
    <location>
        <position position="313"/>
    </location>
    <ligand>
        <name>S-adenosyl-L-methionine</name>
        <dbReference type="ChEBI" id="CHEBI:59789"/>
    </ligand>
</feature>
<accession>Q82TM7</accession>
<reference key="1">
    <citation type="journal article" date="2003" name="J. Bacteriol.">
        <title>Complete genome sequence of the ammonia-oxidizing bacterium and obligate chemolithoautotroph Nitrosomonas europaea.</title>
        <authorList>
            <person name="Chain P."/>
            <person name="Lamerdin J.E."/>
            <person name="Larimer F.W."/>
            <person name="Regala W."/>
            <person name="Lao V."/>
            <person name="Land M.L."/>
            <person name="Hauser L."/>
            <person name="Hooper A.B."/>
            <person name="Klotz M.G."/>
            <person name="Norton J."/>
            <person name="Sayavedra-Soto L.A."/>
            <person name="Arciero D.M."/>
            <person name="Hommes N.G."/>
            <person name="Whittaker M.M."/>
            <person name="Arp D.J."/>
        </authorList>
    </citation>
    <scope>NUCLEOTIDE SEQUENCE [LARGE SCALE GENOMIC DNA]</scope>
    <source>
        <strain>ATCC 19718 / CIP 103999 / KCTC 2705 / NBRC 14298</strain>
    </source>
</reference>
<keyword id="KW-0004">4Fe-4S</keyword>
<keyword id="KW-0408">Iron</keyword>
<keyword id="KW-0411">Iron-sulfur</keyword>
<keyword id="KW-0479">Metal-binding</keyword>
<keyword id="KW-0489">Methyltransferase</keyword>
<keyword id="KW-1185">Reference proteome</keyword>
<keyword id="KW-0949">S-adenosyl-L-methionine</keyword>
<keyword id="KW-0808">Transferase</keyword>
<comment type="similarity">
    <text evidence="2">Belongs to the class I-like SAM-binding methyltransferase superfamily. RNA M5U methyltransferase family.</text>
</comment>
<gene>
    <name type="ordered locus">NE1857</name>
</gene>
<proteinExistence type="inferred from homology"/>
<dbReference type="EC" id="2.1.1.-"/>
<dbReference type="EMBL" id="AL954747">
    <property type="protein sequence ID" value="CAD85768.1"/>
    <property type="molecule type" value="Genomic_DNA"/>
</dbReference>
<dbReference type="RefSeq" id="WP_011112395.1">
    <property type="nucleotide sequence ID" value="NC_004757.1"/>
</dbReference>
<dbReference type="SMR" id="Q82TM7"/>
<dbReference type="STRING" id="228410.NE1857"/>
<dbReference type="GeneID" id="87105016"/>
<dbReference type="KEGG" id="neu:NE1857"/>
<dbReference type="eggNOG" id="COG2265">
    <property type="taxonomic scope" value="Bacteria"/>
</dbReference>
<dbReference type="HOGENOM" id="CLU_014689_8_1_4"/>
<dbReference type="OrthoDB" id="9804590at2"/>
<dbReference type="PhylomeDB" id="Q82TM7"/>
<dbReference type="Proteomes" id="UP000001416">
    <property type="component" value="Chromosome"/>
</dbReference>
<dbReference type="GO" id="GO:0051539">
    <property type="term" value="F:4 iron, 4 sulfur cluster binding"/>
    <property type="evidence" value="ECO:0007669"/>
    <property type="project" value="UniProtKB-KW"/>
</dbReference>
<dbReference type="GO" id="GO:0046872">
    <property type="term" value="F:metal ion binding"/>
    <property type="evidence" value="ECO:0007669"/>
    <property type="project" value="UniProtKB-KW"/>
</dbReference>
<dbReference type="GO" id="GO:0070041">
    <property type="term" value="F:rRNA (uridine-C5-)-methyltransferase activity"/>
    <property type="evidence" value="ECO:0007669"/>
    <property type="project" value="TreeGrafter"/>
</dbReference>
<dbReference type="GO" id="GO:0070475">
    <property type="term" value="P:rRNA base methylation"/>
    <property type="evidence" value="ECO:0007669"/>
    <property type="project" value="TreeGrafter"/>
</dbReference>
<dbReference type="CDD" id="cd02440">
    <property type="entry name" value="AdoMet_MTases"/>
    <property type="match status" value="1"/>
</dbReference>
<dbReference type="Gene3D" id="2.40.50.1070">
    <property type="match status" value="1"/>
</dbReference>
<dbReference type="Gene3D" id="2.40.50.140">
    <property type="entry name" value="Nucleic acid-binding proteins"/>
    <property type="match status" value="1"/>
</dbReference>
<dbReference type="Gene3D" id="3.40.50.150">
    <property type="entry name" value="Vaccinia Virus protein VP39"/>
    <property type="match status" value="1"/>
</dbReference>
<dbReference type="InterPro" id="IPR030390">
    <property type="entry name" value="MeTrfase_TrmA_AS"/>
</dbReference>
<dbReference type="InterPro" id="IPR030391">
    <property type="entry name" value="MeTrfase_TrmA_CS"/>
</dbReference>
<dbReference type="InterPro" id="IPR012340">
    <property type="entry name" value="NA-bd_OB-fold"/>
</dbReference>
<dbReference type="InterPro" id="IPR029063">
    <property type="entry name" value="SAM-dependent_MTases_sf"/>
</dbReference>
<dbReference type="InterPro" id="IPR010280">
    <property type="entry name" value="U5_MeTrfase_fam"/>
</dbReference>
<dbReference type="PANTHER" id="PTHR11061">
    <property type="entry name" value="RNA M5U METHYLTRANSFERASE"/>
    <property type="match status" value="1"/>
</dbReference>
<dbReference type="PANTHER" id="PTHR11061:SF30">
    <property type="entry name" value="TRNA (URACIL(54)-C(5))-METHYLTRANSFERASE"/>
    <property type="match status" value="1"/>
</dbReference>
<dbReference type="Pfam" id="PF05958">
    <property type="entry name" value="tRNA_U5-meth_tr"/>
    <property type="match status" value="1"/>
</dbReference>
<dbReference type="SUPFAM" id="SSF50249">
    <property type="entry name" value="Nucleic acid-binding proteins"/>
    <property type="match status" value="1"/>
</dbReference>
<dbReference type="SUPFAM" id="SSF53335">
    <property type="entry name" value="S-adenosyl-L-methionine-dependent methyltransferases"/>
    <property type="match status" value="1"/>
</dbReference>
<dbReference type="PROSITE" id="PS51687">
    <property type="entry name" value="SAM_MT_RNA_M5U"/>
    <property type="match status" value="1"/>
</dbReference>
<dbReference type="PROSITE" id="PS01230">
    <property type="entry name" value="TRMA_1"/>
    <property type="match status" value="1"/>
</dbReference>
<dbReference type="PROSITE" id="PS01231">
    <property type="entry name" value="TRMA_2"/>
    <property type="match status" value="1"/>
</dbReference>